<protein>
    <recommendedName>
        <fullName evidence="1">Urease accessory protein UreE</fullName>
    </recommendedName>
</protein>
<sequence length="151" mass="17302">MIIEQVVGNIDNISDEILNKLHLENVFVESSNLVKKVQRVVTDHGREIGICLNGQKDLSPGDILYMDERDIIVLNVIPDDLLVIRPSSLRQMGDIAHKIGNRHIPAQFDEIEMLVQYDYLVEELLKQLEVPYTRENKKVKLAFRHVGHSHG</sequence>
<reference key="1">
    <citation type="submission" date="2007-11" db="EMBL/GenBank/DDBJ databases">
        <title>Complete genome sequence of Clostridium phytofermentans ISDg.</title>
        <authorList>
            <person name="Leschine S.B."/>
            <person name="Warnick T.A."/>
            <person name="Blanchard J.L."/>
            <person name="Schnell D.J."/>
            <person name="Petit E.L."/>
            <person name="LaTouf W.G."/>
            <person name="Copeland A."/>
            <person name="Lucas S."/>
            <person name="Lapidus A."/>
            <person name="Barry K."/>
            <person name="Glavina del Rio T."/>
            <person name="Dalin E."/>
            <person name="Tice H."/>
            <person name="Pitluck S."/>
            <person name="Kiss H."/>
            <person name="Brettin T."/>
            <person name="Bruce D."/>
            <person name="Detter J.C."/>
            <person name="Han C."/>
            <person name="Kuske C."/>
            <person name="Schmutz J."/>
            <person name="Larimer F."/>
            <person name="Land M."/>
            <person name="Hauser L."/>
            <person name="Kyrpides N."/>
            <person name="Kim E.A."/>
            <person name="Richardson P."/>
        </authorList>
    </citation>
    <scope>NUCLEOTIDE SEQUENCE [LARGE SCALE GENOMIC DNA]</scope>
    <source>
        <strain>ATCC 700394 / DSM 18823 / ISDg</strain>
    </source>
</reference>
<proteinExistence type="inferred from homology"/>
<feature type="chain" id="PRO_1000083888" description="Urease accessory protein UreE">
    <location>
        <begin position="1"/>
        <end position="151"/>
    </location>
</feature>
<organism>
    <name type="scientific">Lachnoclostridium phytofermentans (strain ATCC 700394 / DSM 18823 / ISDg)</name>
    <name type="common">Clostridium phytofermentans</name>
    <dbReference type="NCBI Taxonomy" id="357809"/>
    <lineage>
        <taxon>Bacteria</taxon>
        <taxon>Bacillati</taxon>
        <taxon>Bacillota</taxon>
        <taxon>Clostridia</taxon>
        <taxon>Lachnospirales</taxon>
        <taxon>Lachnospiraceae</taxon>
    </lineage>
</organism>
<comment type="function">
    <text evidence="1">Involved in urease metallocenter assembly. Binds nickel. Probably functions as a nickel donor during metallocenter assembly.</text>
</comment>
<comment type="subcellular location">
    <subcellularLocation>
        <location evidence="1">Cytoplasm</location>
    </subcellularLocation>
</comment>
<comment type="similarity">
    <text evidence="1">Belongs to the UreE family.</text>
</comment>
<evidence type="ECO:0000255" key="1">
    <source>
        <dbReference type="HAMAP-Rule" id="MF_00822"/>
    </source>
</evidence>
<dbReference type="EMBL" id="CP000885">
    <property type="protein sequence ID" value="ABX41073.1"/>
    <property type="molecule type" value="Genomic_DNA"/>
</dbReference>
<dbReference type="RefSeq" id="WP_012198716.1">
    <property type="nucleotide sequence ID" value="NC_010001.1"/>
</dbReference>
<dbReference type="SMR" id="A9KJR8"/>
<dbReference type="STRING" id="357809.Cphy_0686"/>
<dbReference type="KEGG" id="cpy:Cphy_0686"/>
<dbReference type="eggNOG" id="COG2371">
    <property type="taxonomic scope" value="Bacteria"/>
</dbReference>
<dbReference type="HOGENOM" id="CLU_093757_3_1_9"/>
<dbReference type="OrthoDB" id="9810882at2"/>
<dbReference type="Proteomes" id="UP000000370">
    <property type="component" value="Chromosome"/>
</dbReference>
<dbReference type="GO" id="GO:0005737">
    <property type="term" value="C:cytoplasm"/>
    <property type="evidence" value="ECO:0007669"/>
    <property type="project" value="UniProtKB-SubCell"/>
</dbReference>
<dbReference type="GO" id="GO:0016151">
    <property type="term" value="F:nickel cation binding"/>
    <property type="evidence" value="ECO:0007669"/>
    <property type="project" value="UniProtKB-UniRule"/>
</dbReference>
<dbReference type="GO" id="GO:0051082">
    <property type="term" value="F:unfolded protein binding"/>
    <property type="evidence" value="ECO:0007669"/>
    <property type="project" value="UniProtKB-UniRule"/>
</dbReference>
<dbReference type="GO" id="GO:0006457">
    <property type="term" value="P:protein folding"/>
    <property type="evidence" value="ECO:0007669"/>
    <property type="project" value="InterPro"/>
</dbReference>
<dbReference type="GO" id="GO:0065003">
    <property type="term" value="P:protein-containing complex assembly"/>
    <property type="evidence" value="ECO:0007669"/>
    <property type="project" value="InterPro"/>
</dbReference>
<dbReference type="GO" id="GO:0019627">
    <property type="term" value="P:urea metabolic process"/>
    <property type="evidence" value="ECO:0007669"/>
    <property type="project" value="InterPro"/>
</dbReference>
<dbReference type="CDD" id="cd00571">
    <property type="entry name" value="UreE"/>
    <property type="match status" value="1"/>
</dbReference>
<dbReference type="Gene3D" id="2.60.260.20">
    <property type="entry name" value="Urease metallochaperone UreE, N-terminal domain"/>
    <property type="match status" value="1"/>
</dbReference>
<dbReference type="Gene3D" id="3.30.70.790">
    <property type="entry name" value="UreE, C-terminal domain"/>
    <property type="match status" value="1"/>
</dbReference>
<dbReference type="HAMAP" id="MF_00822">
    <property type="entry name" value="UreE"/>
    <property type="match status" value="1"/>
</dbReference>
<dbReference type="InterPro" id="IPR012406">
    <property type="entry name" value="UreE"/>
</dbReference>
<dbReference type="InterPro" id="IPR007864">
    <property type="entry name" value="UreE_C_dom"/>
</dbReference>
<dbReference type="InterPro" id="IPR004029">
    <property type="entry name" value="UreE_N"/>
</dbReference>
<dbReference type="InterPro" id="IPR036118">
    <property type="entry name" value="UreE_N_sf"/>
</dbReference>
<dbReference type="NCBIfam" id="NF009755">
    <property type="entry name" value="PRK13261.2-1"/>
    <property type="match status" value="1"/>
</dbReference>
<dbReference type="Pfam" id="PF05194">
    <property type="entry name" value="UreE_C"/>
    <property type="match status" value="1"/>
</dbReference>
<dbReference type="Pfam" id="PF02814">
    <property type="entry name" value="UreE_N"/>
    <property type="match status" value="1"/>
</dbReference>
<dbReference type="PIRSF" id="PIRSF036402">
    <property type="entry name" value="Ureas_acces_UreE"/>
    <property type="match status" value="1"/>
</dbReference>
<dbReference type="SMART" id="SM00988">
    <property type="entry name" value="UreE_N"/>
    <property type="match status" value="1"/>
</dbReference>
<dbReference type="SUPFAM" id="SSF69737">
    <property type="entry name" value="Urease metallochaperone UreE, C-terminal domain"/>
    <property type="match status" value="1"/>
</dbReference>
<dbReference type="SUPFAM" id="SSF69287">
    <property type="entry name" value="Urease metallochaperone UreE, N-terminal domain"/>
    <property type="match status" value="1"/>
</dbReference>
<accession>A9KJR8</accession>
<gene>
    <name evidence="1" type="primary">ureE</name>
    <name type="ordered locus">Cphy_0686</name>
</gene>
<keyword id="KW-0143">Chaperone</keyword>
<keyword id="KW-0963">Cytoplasm</keyword>
<keyword id="KW-0533">Nickel</keyword>
<keyword id="KW-0996">Nickel insertion</keyword>
<keyword id="KW-1185">Reference proteome</keyword>
<name>UREE_LACP7</name>